<evidence type="ECO:0000255" key="1"/>
<evidence type="ECO:0000269" key="2">
    <source>
    </source>
</evidence>
<evidence type="ECO:0000305" key="3"/>
<dbReference type="EMBL" id="U31449">
    <property type="protein sequence ID" value="AAA74745.1"/>
    <property type="molecule type" value="mRNA"/>
</dbReference>
<dbReference type="EMBL" id="BT007430">
    <property type="protein sequence ID" value="AAP36098.1"/>
    <property type="molecule type" value="mRNA"/>
</dbReference>
<dbReference type="EMBL" id="AK315464">
    <property type="protein sequence ID" value="BAG37851.1"/>
    <property type="molecule type" value="mRNA"/>
</dbReference>
<dbReference type="EMBL" id="CH471052">
    <property type="protein sequence ID" value="EAW78871.1"/>
    <property type="molecule type" value="Genomic_DNA"/>
</dbReference>
<dbReference type="EMBL" id="BC001386">
    <property type="protein sequence ID" value="AAH01386.1"/>
    <property type="molecule type" value="mRNA"/>
</dbReference>
<dbReference type="CCDS" id="CCDS46932.1"/>
<dbReference type="RefSeq" id="NP_004608.1">
    <property type="nucleotide sequence ID" value="NM_004617.4"/>
</dbReference>
<dbReference type="BioGRID" id="112959">
    <property type="interactions" value="23"/>
</dbReference>
<dbReference type="FunCoup" id="P48230">
    <property type="interactions" value="27"/>
</dbReference>
<dbReference type="IntAct" id="P48230">
    <property type="interactions" value="23"/>
</dbReference>
<dbReference type="MINT" id="P48230"/>
<dbReference type="STRING" id="9606.ENSP00000305852"/>
<dbReference type="TCDB" id="8.A.75.1.1">
    <property type="family name" value="the transmembrane 4 l6 (tm4l6) family"/>
</dbReference>
<dbReference type="GlyCosmos" id="P48230">
    <property type="glycosylation" value="2 sites, No reported glycans"/>
</dbReference>
<dbReference type="GlyGen" id="P48230">
    <property type="glycosylation" value="2 sites"/>
</dbReference>
<dbReference type="iPTMnet" id="P48230"/>
<dbReference type="PhosphoSitePlus" id="P48230"/>
<dbReference type="BioMuta" id="TM4SF4"/>
<dbReference type="DMDM" id="1352457"/>
<dbReference type="jPOST" id="P48230"/>
<dbReference type="MassIVE" id="P48230"/>
<dbReference type="PaxDb" id="9606-ENSP00000305852"/>
<dbReference type="PeptideAtlas" id="P48230"/>
<dbReference type="ProteomicsDB" id="55873"/>
<dbReference type="Antibodypedia" id="33572">
    <property type="antibodies" value="137 antibodies from 20 providers"/>
</dbReference>
<dbReference type="DNASU" id="7104"/>
<dbReference type="Ensembl" id="ENST00000305354.5">
    <property type="protein sequence ID" value="ENSP00000305852.4"/>
    <property type="gene ID" value="ENSG00000169903.7"/>
</dbReference>
<dbReference type="GeneID" id="7104"/>
<dbReference type="KEGG" id="hsa:7104"/>
<dbReference type="MANE-Select" id="ENST00000305354.5">
    <property type="protein sequence ID" value="ENSP00000305852.4"/>
    <property type="RefSeq nucleotide sequence ID" value="NM_004617.4"/>
    <property type="RefSeq protein sequence ID" value="NP_004608.1"/>
</dbReference>
<dbReference type="UCSC" id="uc003exd.3">
    <property type="organism name" value="human"/>
</dbReference>
<dbReference type="AGR" id="HGNC:11856"/>
<dbReference type="CTD" id="7104"/>
<dbReference type="DisGeNET" id="7104"/>
<dbReference type="GeneCards" id="TM4SF4"/>
<dbReference type="HGNC" id="HGNC:11856">
    <property type="gene designation" value="TM4SF4"/>
</dbReference>
<dbReference type="HPA" id="ENSG00000169903">
    <property type="expression patterns" value="Group enriched (gallbladder, intestine, liver)"/>
</dbReference>
<dbReference type="MIM" id="606567">
    <property type="type" value="gene"/>
</dbReference>
<dbReference type="neXtProt" id="NX_P48230"/>
<dbReference type="OpenTargets" id="ENSG00000169903"/>
<dbReference type="PharmGKB" id="PA36557"/>
<dbReference type="VEuPathDB" id="HostDB:ENSG00000169903"/>
<dbReference type="eggNOG" id="ENOG502QVGK">
    <property type="taxonomic scope" value="Eukaryota"/>
</dbReference>
<dbReference type="GeneTree" id="ENSGT01030000234590"/>
<dbReference type="HOGENOM" id="CLU_087168_1_0_1"/>
<dbReference type="InParanoid" id="P48230"/>
<dbReference type="OMA" id="CGCCGNQ"/>
<dbReference type="OrthoDB" id="9449742at2759"/>
<dbReference type="PAN-GO" id="P48230">
    <property type="GO annotations" value="1 GO annotation based on evolutionary models"/>
</dbReference>
<dbReference type="PhylomeDB" id="P48230"/>
<dbReference type="TreeFam" id="TF331371"/>
<dbReference type="PathwayCommons" id="P48230"/>
<dbReference type="SignaLink" id="P48230"/>
<dbReference type="BioGRID-ORCS" id="7104">
    <property type="hits" value="14 hits in 1139 CRISPR screens"/>
</dbReference>
<dbReference type="ChiTaRS" id="TM4SF4">
    <property type="organism name" value="human"/>
</dbReference>
<dbReference type="GenomeRNAi" id="7104"/>
<dbReference type="Pharos" id="P48230">
    <property type="development level" value="Tbio"/>
</dbReference>
<dbReference type="PRO" id="PR:P48230"/>
<dbReference type="Proteomes" id="UP000005640">
    <property type="component" value="Chromosome 3"/>
</dbReference>
<dbReference type="RNAct" id="P48230">
    <property type="molecule type" value="protein"/>
</dbReference>
<dbReference type="Bgee" id="ENSG00000169903">
    <property type="expression patterns" value="Expressed in gall bladder and 100 other cell types or tissues"/>
</dbReference>
<dbReference type="ExpressionAtlas" id="P48230">
    <property type="expression patterns" value="baseline and differential"/>
</dbReference>
<dbReference type="GO" id="GO:0016020">
    <property type="term" value="C:membrane"/>
    <property type="evidence" value="ECO:0000318"/>
    <property type="project" value="GO_Central"/>
</dbReference>
<dbReference type="GO" id="GO:0042246">
    <property type="term" value="P:tissue regeneration"/>
    <property type="evidence" value="ECO:0007669"/>
    <property type="project" value="Ensembl"/>
</dbReference>
<dbReference type="InterPro" id="IPR008661">
    <property type="entry name" value="L6_membrane"/>
</dbReference>
<dbReference type="PANTHER" id="PTHR14198">
    <property type="entry name" value="TRANSMEMBRANE 4 L6 FAMILY MEMBER 1-RELATED"/>
    <property type="match status" value="1"/>
</dbReference>
<dbReference type="PANTHER" id="PTHR14198:SF15">
    <property type="entry name" value="TRANSMEMBRANE 4 L6 FAMILY MEMBER 4"/>
    <property type="match status" value="1"/>
</dbReference>
<dbReference type="Pfam" id="PF05805">
    <property type="entry name" value="L6_membrane"/>
    <property type="match status" value="1"/>
</dbReference>
<name>T4S4_HUMAN</name>
<gene>
    <name type="primary">TM4SF4</name>
    <name type="synonym">ILTMP</name>
</gene>
<protein>
    <recommendedName>
        <fullName>Transmembrane 4 L6 family member 4</fullName>
    </recommendedName>
    <alternativeName>
        <fullName>Intestine and liver tetraspan membrane protein</fullName>
        <shortName>IL-TMP</shortName>
    </alternativeName>
</protein>
<sequence length="202" mass="21396">MCTGGCARCLGGTLIPLAFFGFLANILLFFPGGKVIDDNDHLSQEIWFFGGILGSGVLMIFPALVFLGLKNNDCCGCCGNEGCGKRFAMFTSTIFAVVGFLGAGYSFIISAISINKGPKCLMANSTWGYPFHDGDYLNDEALWNKCREPLNVVPWNLTLFSILLVVGGIQMVLCAIQVVNGLLGTLCGDCQCCGCCGGDGPV</sequence>
<organism>
    <name type="scientific">Homo sapiens</name>
    <name type="common">Human</name>
    <dbReference type="NCBI Taxonomy" id="9606"/>
    <lineage>
        <taxon>Eukaryota</taxon>
        <taxon>Metazoa</taxon>
        <taxon>Chordata</taxon>
        <taxon>Craniata</taxon>
        <taxon>Vertebrata</taxon>
        <taxon>Euteleostomi</taxon>
        <taxon>Mammalia</taxon>
        <taxon>Eutheria</taxon>
        <taxon>Euarchontoglires</taxon>
        <taxon>Primates</taxon>
        <taxon>Haplorrhini</taxon>
        <taxon>Catarrhini</taxon>
        <taxon>Hominidae</taxon>
        <taxon>Homo</taxon>
    </lineage>
</organism>
<reference key="1">
    <citation type="journal article" date="1995" name="J. Biol. Chem.">
        <title>A tetraspan membrane glycoprotein produced in the human intestinal epithelium and liver that can regulate cell density-dependent proliferation.</title>
        <authorList>
            <person name="Wice B.M."/>
            <person name="Gordon J.I."/>
        </authorList>
    </citation>
    <scope>NUCLEOTIDE SEQUENCE [MRNA]</scope>
    <source>
        <tissue>Intestine</tissue>
        <tissue>Liver</tissue>
    </source>
</reference>
<reference key="2">
    <citation type="submission" date="2003-05" db="EMBL/GenBank/DDBJ databases">
        <title>Cloning of human full-length CDSs in BD Creator(TM) system donor vector.</title>
        <authorList>
            <person name="Kalnine N."/>
            <person name="Chen X."/>
            <person name="Rolfs A."/>
            <person name="Halleck A."/>
            <person name="Hines L."/>
            <person name="Eisenstein S."/>
            <person name="Koundinya M."/>
            <person name="Raphael J."/>
            <person name="Moreira D."/>
            <person name="Kelley T."/>
            <person name="LaBaer J."/>
            <person name="Lin Y."/>
            <person name="Phelan M."/>
            <person name="Farmer A."/>
        </authorList>
    </citation>
    <scope>NUCLEOTIDE SEQUENCE [LARGE SCALE MRNA]</scope>
</reference>
<reference key="3">
    <citation type="journal article" date="2004" name="Nat. Genet.">
        <title>Complete sequencing and characterization of 21,243 full-length human cDNAs.</title>
        <authorList>
            <person name="Ota T."/>
            <person name="Suzuki Y."/>
            <person name="Nishikawa T."/>
            <person name="Otsuki T."/>
            <person name="Sugiyama T."/>
            <person name="Irie R."/>
            <person name="Wakamatsu A."/>
            <person name="Hayashi K."/>
            <person name="Sato H."/>
            <person name="Nagai K."/>
            <person name="Kimura K."/>
            <person name="Makita H."/>
            <person name="Sekine M."/>
            <person name="Obayashi M."/>
            <person name="Nishi T."/>
            <person name="Shibahara T."/>
            <person name="Tanaka T."/>
            <person name="Ishii S."/>
            <person name="Yamamoto J."/>
            <person name="Saito K."/>
            <person name="Kawai Y."/>
            <person name="Isono Y."/>
            <person name="Nakamura Y."/>
            <person name="Nagahari K."/>
            <person name="Murakami K."/>
            <person name="Yasuda T."/>
            <person name="Iwayanagi T."/>
            <person name="Wagatsuma M."/>
            <person name="Shiratori A."/>
            <person name="Sudo H."/>
            <person name="Hosoiri T."/>
            <person name="Kaku Y."/>
            <person name="Kodaira H."/>
            <person name="Kondo H."/>
            <person name="Sugawara M."/>
            <person name="Takahashi M."/>
            <person name="Kanda K."/>
            <person name="Yokoi T."/>
            <person name="Furuya T."/>
            <person name="Kikkawa E."/>
            <person name="Omura Y."/>
            <person name="Abe K."/>
            <person name="Kamihara K."/>
            <person name="Katsuta N."/>
            <person name="Sato K."/>
            <person name="Tanikawa M."/>
            <person name="Yamazaki M."/>
            <person name="Ninomiya K."/>
            <person name="Ishibashi T."/>
            <person name="Yamashita H."/>
            <person name="Murakawa K."/>
            <person name="Fujimori K."/>
            <person name="Tanai H."/>
            <person name="Kimata M."/>
            <person name="Watanabe M."/>
            <person name="Hiraoka S."/>
            <person name="Chiba Y."/>
            <person name="Ishida S."/>
            <person name="Ono Y."/>
            <person name="Takiguchi S."/>
            <person name="Watanabe S."/>
            <person name="Yosida M."/>
            <person name="Hotuta T."/>
            <person name="Kusano J."/>
            <person name="Kanehori K."/>
            <person name="Takahashi-Fujii A."/>
            <person name="Hara H."/>
            <person name="Tanase T.-O."/>
            <person name="Nomura Y."/>
            <person name="Togiya S."/>
            <person name="Komai F."/>
            <person name="Hara R."/>
            <person name="Takeuchi K."/>
            <person name="Arita M."/>
            <person name="Imose N."/>
            <person name="Musashino K."/>
            <person name="Yuuki H."/>
            <person name="Oshima A."/>
            <person name="Sasaki N."/>
            <person name="Aotsuka S."/>
            <person name="Yoshikawa Y."/>
            <person name="Matsunawa H."/>
            <person name="Ichihara T."/>
            <person name="Shiohata N."/>
            <person name="Sano S."/>
            <person name="Moriya S."/>
            <person name="Momiyama H."/>
            <person name="Satoh N."/>
            <person name="Takami S."/>
            <person name="Terashima Y."/>
            <person name="Suzuki O."/>
            <person name="Nakagawa S."/>
            <person name="Senoh A."/>
            <person name="Mizoguchi H."/>
            <person name="Goto Y."/>
            <person name="Shimizu F."/>
            <person name="Wakebe H."/>
            <person name="Hishigaki H."/>
            <person name="Watanabe T."/>
            <person name="Sugiyama A."/>
            <person name="Takemoto M."/>
            <person name="Kawakami B."/>
            <person name="Yamazaki M."/>
            <person name="Watanabe K."/>
            <person name="Kumagai A."/>
            <person name="Itakura S."/>
            <person name="Fukuzumi Y."/>
            <person name="Fujimori Y."/>
            <person name="Komiyama M."/>
            <person name="Tashiro H."/>
            <person name="Tanigami A."/>
            <person name="Fujiwara T."/>
            <person name="Ono T."/>
            <person name="Yamada K."/>
            <person name="Fujii Y."/>
            <person name="Ozaki K."/>
            <person name="Hirao M."/>
            <person name="Ohmori Y."/>
            <person name="Kawabata A."/>
            <person name="Hikiji T."/>
            <person name="Kobatake N."/>
            <person name="Inagaki H."/>
            <person name="Ikema Y."/>
            <person name="Okamoto S."/>
            <person name="Okitani R."/>
            <person name="Kawakami T."/>
            <person name="Noguchi S."/>
            <person name="Itoh T."/>
            <person name="Shigeta K."/>
            <person name="Senba T."/>
            <person name="Matsumura K."/>
            <person name="Nakajima Y."/>
            <person name="Mizuno T."/>
            <person name="Morinaga M."/>
            <person name="Sasaki M."/>
            <person name="Togashi T."/>
            <person name="Oyama M."/>
            <person name="Hata H."/>
            <person name="Watanabe M."/>
            <person name="Komatsu T."/>
            <person name="Mizushima-Sugano J."/>
            <person name="Satoh T."/>
            <person name="Shirai Y."/>
            <person name="Takahashi Y."/>
            <person name="Nakagawa K."/>
            <person name="Okumura K."/>
            <person name="Nagase T."/>
            <person name="Nomura N."/>
            <person name="Kikuchi H."/>
            <person name="Masuho Y."/>
            <person name="Yamashita R."/>
            <person name="Nakai K."/>
            <person name="Yada T."/>
            <person name="Nakamura Y."/>
            <person name="Ohara O."/>
            <person name="Isogai T."/>
            <person name="Sugano S."/>
        </authorList>
    </citation>
    <scope>NUCLEOTIDE SEQUENCE [LARGE SCALE MRNA]</scope>
    <source>
        <tissue>Liver</tissue>
    </source>
</reference>
<reference key="4">
    <citation type="submission" date="2005-09" db="EMBL/GenBank/DDBJ databases">
        <authorList>
            <person name="Mural R.J."/>
            <person name="Istrail S."/>
            <person name="Sutton G.G."/>
            <person name="Florea L."/>
            <person name="Halpern A.L."/>
            <person name="Mobarry C.M."/>
            <person name="Lippert R."/>
            <person name="Walenz B."/>
            <person name="Shatkay H."/>
            <person name="Dew I."/>
            <person name="Miller J.R."/>
            <person name="Flanigan M.J."/>
            <person name="Edwards N.J."/>
            <person name="Bolanos R."/>
            <person name="Fasulo D."/>
            <person name="Halldorsson B.V."/>
            <person name="Hannenhalli S."/>
            <person name="Turner R."/>
            <person name="Yooseph S."/>
            <person name="Lu F."/>
            <person name="Nusskern D.R."/>
            <person name="Shue B.C."/>
            <person name="Zheng X.H."/>
            <person name="Zhong F."/>
            <person name="Delcher A.L."/>
            <person name="Huson D.H."/>
            <person name="Kravitz S.A."/>
            <person name="Mouchard L."/>
            <person name="Reinert K."/>
            <person name="Remington K.A."/>
            <person name="Clark A.G."/>
            <person name="Waterman M.S."/>
            <person name="Eichler E.E."/>
            <person name="Adams M.D."/>
            <person name="Hunkapiller M.W."/>
            <person name="Myers E.W."/>
            <person name="Venter J.C."/>
        </authorList>
    </citation>
    <scope>NUCLEOTIDE SEQUENCE [LARGE SCALE GENOMIC DNA]</scope>
</reference>
<reference key="5">
    <citation type="journal article" date="2004" name="Genome Res.">
        <title>The status, quality, and expansion of the NIH full-length cDNA project: the Mammalian Gene Collection (MGC).</title>
        <authorList>
            <consortium name="The MGC Project Team"/>
        </authorList>
    </citation>
    <scope>NUCLEOTIDE SEQUENCE [LARGE SCALE MRNA]</scope>
    <source>
        <tissue>Colon</tissue>
    </source>
</reference>
<reference key="6">
    <citation type="journal article" date="2009" name="J. Proteome Res.">
        <title>Glycoproteomics analysis of human liver tissue by combination of multiple enzyme digestion and hydrazide chemistry.</title>
        <authorList>
            <person name="Chen R."/>
            <person name="Jiang X."/>
            <person name="Sun D."/>
            <person name="Han G."/>
            <person name="Wang F."/>
            <person name="Ye M."/>
            <person name="Wang L."/>
            <person name="Zou H."/>
        </authorList>
    </citation>
    <scope>GLYCOSYLATION [LARGE SCALE ANALYSIS] AT ASN-124</scope>
    <source>
        <tissue>Liver</tissue>
    </source>
</reference>
<comment type="function">
    <text>Regulates the adhesive and proliferative status of intestinal epithelial cells. Can mediate density-dependent cell proliferation.</text>
</comment>
<comment type="interaction">
    <interactant intactId="EBI-8650934">
        <id>P48230</id>
    </interactant>
    <interactant intactId="EBI-2606497">
        <id>Q8WW43</id>
        <label>APH1B</label>
    </interactant>
    <organismsDiffer>false</organismsDiffer>
    <experiments>3</experiments>
</comment>
<comment type="interaction">
    <interactant intactId="EBI-8650934">
        <id>P48230</id>
    </interactant>
    <interactant intactId="EBI-7797864">
        <id>P11912</id>
        <label>CD79A</label>
    </interactant>
    <organismsDiffer>false</organismsDiffer>
    <experiments>3</experiments>
</comment>
<comment type="interaction">
    <interactant intactId="EBI-8650934">
        <id>P48230</id>
    </interactant>
    <interactant intactId="EBI-11977093">
        <id>Q6ZS10</id>
        <label>CLEC17A</label>
    </interactant>
    <organismsDiffer>false</organismsDiffer>
    <experiments>3</experiments>
</comment>
<comment type="interaction">
    <interactant intactId="EBI-8650934">
        <id>P48230</id>
    </interactant>
    <interactant intactId="EBI-2339374">
        <id>Q8TAZ6</id>
        <label>CMTM2</label>
    </interactant>
    <organismsDiffer>false</organismsDiffer>
    <experiments>3</experiments>
</comment>
<comment type="interaction">
    <interactant intactId="EBI-8650934">
        <id>P48230</id>
    </interactant>
    <interactant intactId="EBI-781551">
        <id>Q9Y282</id>
        <label>ERGIC3</label>
    </interactant>
    <organismsDiffer>false</organismsDiffer>
    <experiments>3</experiments>
</comment>
<comment type="interaction">
    <interactant intactId="EBI-8650934">
        <id>P48230</id>
    </interactant>
    <interactant intactId="EBI-743099">
        <id>Q969F0</id>
        <label>FATE1</label>
    </interactant>
    <organismsDiffer>false</organismsDiffer>
    <experiments>3</experiments>
</comment>
<comment type="interaction">
    <interactant intactId="EBI-8650934">
        <id>P48230</id>
    </interactant>
    <interactant intactId="EBI-2833872">
        <id>O15552</id>
        <label>FFAR2</label>
    </interactant>
    <organismsDiffer>false</organismsDiffer>
    <experiments>3</experiments>
</comment>
<comment type="interaction">
    <interactant intactId="EBI-8650934">
        <id>P48230</id>
    </interactant>
    <interactant intactId="EBI-17565645">
        <id>P08034</id>
        <label>GJB1</label>
    </interactant>
    <organismsDiffer>false</organismsDiffer>
    <experiments>3</experiments>
</comment>
<comment type="interaction">
    <interactant intactId="EBI-8650934">
        <id>P48230</id>
    </interactant>
    <interactant intactId="EBI-12831526">
        <id>Q9NTQ9</id>
        <label>GJB4</label>
    </interactant>
    <organismsDiffer>false</organismsDiffer>
    <experiments>3</experiments>
</comment>
<comment type="interaction">
    <interactant intactId="EBI-8650934">
        <id>P48230</id>
    </interactant>
    <interactant intactId="EBI-3909454">
        <id>O95377</id>
        <label>GJB5</label>
    </interactant>
    <organismsDiffer>false</organismsDiffer>
    <experiments>3</experiments>
</comment>
<comment type="interaction">
    <interactant intactId="EBI-8650934">
        <id>P48230</id>
    </interactant>
    <interactant intactId="EBI-17935713">
        <id>Q96P66</id>
        <label>GPR101</label>
    </interactant>
    <organismsDiffer>false</organismsDiffer>
    <experiments>3</experiments>
</comment>
<comment type="interaction">
    <interactant intactId="EBI-8650934">
        <id>P48230</id>
    </interactant>
    <interactant intactId="EBI-2927498">
        <id>O60883</id>
        <label>GPR37L1</label>
    </interactant>
    <organismsDiffer>false</organismsDiffer>
    <experiments>3</experiments>
</comment>
<comment type="interaction">
    <interactant intactId="EBI-8650934">
        <id>P48230</id>
    </interactant>
    <interactant intactId="EBI-18076404">
        <id>O15529</id>
        <label>GPR42</label>
    </interactant>
    <organismsDiffer>false</organismsDiffer>
    <experiments>3</experiments>
</comment>
<comment type="interaction">
    <interactant intactId="EBI-8650934">
        <id>P48230</id>
    </interactant>
    <interactant intactId="EBI-11721746">
        <id>Q8TED1</id>
        <label>GPX8</label>
    </interactant>
    <organismsDiffer>false</organismsDiffer>
    <experiments>3</experiments>
</comment>
<comment type="interaction">
    <interactant intactId="EBI-8650934">
        <id>P48230</id>
    </interactant>
    <interactant intactId="EBI-3934936">
        <id>O95279</id>
        <label>KCNK5</label>
    </interactant>
    <organismsDiffer>false</organismsDiffer>
    <experiments>3</experiments>
</comment>
<comment type="interaction">
    <interactant intactId="EBI-8650934">
        <id>P48230</id>
    </interactant>
    <interactant intactId="EBI-2820517">
        <id>Q8TAF8</id>
        <label>LHFPL5</label>
    </interactant>
    <organismsDiffer>false</organismsDiffer>
    <experiments>3</experiments>
</comment>
<comment type="interaction">
    <interactant intactId="EBI-8650934">
        <id>P48230</id>
    </interactant>
    <interactant intactId="EBI-12807478">
        <id>P35372-10</id>
        <label>OPRM1</label>
    </interactant>
    <organismsDiffer>false</organismsDiffer>
    <experiments>3</experiments>
</comment>
<comment type="interaction">
    <interactant intactId="EBI-8650934">
        <id>P48230</id>
    </interactant>
    <interactant intactId="EBI-18159983">
        <id>Q3KNW5</id>
        <label>SLC10A6</label>
    </interactant>
    <organismsDiffer>false</organismsDiffer>
    <experiments>3</experiments>
</comment>
<comment type="interaction">
    <interactant intactId="EBI-8650934">
        <id>P48230</id>
    </interactant>
    <interactant intactId="EBI-18271435">
        <id>Q0VAB0</id>
        <label>TBXA2R</label>
    </interactant>
    <organismsDiffer>false</organismsDiffer>
    <experiments>3</experiments>
</comment>
<comment type="interaction">
    <interactant intactId="EBI-8650934">
        <id>P48230</id>
    </interactant>
    <interactant intactId="EBI-8638294">
        <id>Q9NUH8</id>
        <label>TMEM14B</label>
    </interactant>
    <organismsDiffer>false</organismsDiffer>
    <experiments>3</experiments>
</comment>
<comment type="subcellular location">
    <subcellularLocation>
        <location>Membrane</location>
        <topology>Multi-pass membrane protein</topology>
    </subcellularLocation>
</comment>
<comment type="tissue specificity">
    <text>Jejunum and liver.</text>
</comment>
<comment type="PTM">
    <text evidence="2">N-glycosylated. Glycosylation is required for the growth inhibitory effect.</text>
</comment>
<comment type="similarity">
    <text evidence="3">Belongs to the L6 tetraspanin family.</text>
</comment>
<accession>P48230</accession>
<accession>B2RDA4</accession>
<feature type="chain" id="PRO_0000219299" description="Transmembrane 4 L6 family member 4">
    <location>
        <begin position="1"/>
        <end position="202"/>
    </location>
</feature>
<feature type="topological domain" description="Cytoplasmic" evidence="1">
    <location>
        <begin position="1"/>
        <end position="9"/>
    </location>
</feature>
<feature type="transmembrane region" description="Helical" evidence="1">
    <location>
        <begin position="10"/>
        <end position="30"/>
    </location>
</feature>
<feature type="topological domain" description="Extracellular" evidence="1">
    <location>
        <begin position="31"/>
        <end position="45"/>
    </location>
</feature>
<feature type="transmembrane region" description="Helical" evidence="1">
    <location>
        <begin position="46"/>
        <end position="66"/>
    </location>
</feature>
<feature type="topological domain" description="Cytoplasmic" evidence="1">
    <location>
        <begin position="67"/>
        <end position="93"/>
    </location>
</feature>
<feature type="transmembrane region" description="Helical" evidence="1">
    <location>
        <begin position="94"/>
        <end position="114"/>
    </location>
</feature>
<feature type="topological domain" description="Extracellular" evidence="1">
    <location>
        <begin position="115"/>
        <end position="158"/>
    </location>
</feature>
<feature type="transmembrane region" description="Helical" evidence="1">
    <location>
        <begin position="159"/>
        <end position="179"/>
    </location>
</feature>
<feature type="topological domain" description="Cytoplasmic" evidence="1">
    <location>
        <begin position="180"/>
        <end position="202"/>
    </location>
</feature>
<feature type="glycosylation site" description="N-linked (GlcNAc...) asparagine" evidence="2">
    <location>
        <position position="124"/>
    </location>
</feature>
<feature type="glycosylation site" description="N-linked (GlcNAc...) asparagine" evidence="1">
    <location>
        <position position="156"/>
    </location>
</feature>
<proteinExistence type="evidence at protein level"/>
<keyword id="KW-0325">Glycoprotein</keyword>
<keyword id="KW-0472">Membrane</keyword>
<keyword id="KW-1267">Proteomics identification</keyword>
<keyword id="KW-1185">Reference proteome</keyword>
<keyword id="KW-0812">Transmembrane</keyword>
<keyword id="KW-1133">Transmembrane helix</keyword>